<dbReference type="EMBL" id="X69016">
    <property type="protein sequence ID" value="CAA48781.1"/>
    <property type="molecule type" value="Genomic_DNA"/>
</dbReference>
<dbReference type="EMBL" id="BX284603">
    <property type="protein sequence ID" value="CCD66781.1"/>
    <property type="molecule type" value="Genomic_DNA"/>
</dbReference>
<dbReference type="EMBL" id="BX284603">
    <property type="protein sequence ID" value="CCD66782.1"/>
    <property type="molecule type" value="Genomic_DNA"/>
</dbReference>
<dbReference type="PIR" id="S72566">
    <property type="entry name" value="S72566"/>
</dbReference>
<dbReference type="RefSeq" id="NP_001021202.1">
    <molecule id="P30429-2"/>
    <property type="nucleotide sequence ID" value="NM_001026031.5"/>
</dbReference>
<dbReference type="RefSeq" id="NP_001021203.1">
    <molecule id="P30429-1"/>
    <property type="nucleotide sequence ID" value="NM_001026032.3"/>
</dbReference>
<dbReference type="PDB" id="2A5Y">
    <property type="method" value="X-ray"/>
    <property type="resolution" value="2.60 A"/>
    <property type="chains" value="B/C=1-549"/>
</dbReference>
<dbReference type="PDB" id="3LQQ">
    <property type="method" value="X-ray"/>
    <property type="resolution" value="3.53 A"/>
    <property type="chains" value="A/B=1-549"/>
</dbReference>
<dbReference type="PDB" id="3LQR">
    <property type="method" value="X-ray"/>
    <property type="resolution" value="3.90 A"/>
    <property type="chains" value="A/B=1-549"/>
</dbReference>
<dbReference type="PDB" id="4M9S">
    <property type="method" value="X-ray"/>
    <property type="resolution" value="3.21 A"/>
    <property type="chains" value="A/B/C/D=1-549"/>
</dbReference>
<dbReference type="PDB" id="4M9X">
    <property type="method" value="X-ray"/>
    <property type="resolution" value="3.34 A"/>
    <property type="chains" value="A/B=1-549"/>
</dbReference>
<dbReference type="PDB" id="4M9Y">
    <property type="method" value="X-ray"/>
    <property type="resolution" value="4.20 A"/>
    <property type="chains" value="A/B=1-549"/>
</dbReference>
<dbReference type="PDB" id="4M9Z">
    <property type="method" value="X-ray"/>
    <property type="resolution" value="3.40 A"/>
    <property type="chains" value="A/B/C/D=1-549"/>
</dbReference>
<dbReference type="PDB" id="8JNS">
    <property type="method" value="EM"/>
    <property type="resolution" value="4.20 A"/>
    <property type="chains" value="A/B/C/D/E/F/G/H/I=1-549"/>
</dbReference>
<dbReference type="PDB" id="8JO0">
    <property type="method" value="EM"/>
    <property type="resolution" value="3.60 A"/>
    <property type="chains" value="A/B/C/D/E/F/G=1-549, H/I/J/K/L/M=1-110"/>
</dbReference>
<dbReference type="PDB" id="8JOL">
    <property type="method" value="EM"/>
    <property type="resolution" value="3.00 A"/>
    <property type="chains" value="A/B=1-549"/>
</dbReference>
<dbReference type="PDBsum" id="2A5Y"/>
<dbReference type="PDBsum" id="3LQQ"/>
<dbReference type="PDBsum" id="3LQR"/>
<dbReference type="PDBsum" id="4M9S"/>
<dbReference type="PDBsum" id="4M9X"/>
<dbReference type="PDBsum" id="4M9Y"/>
<dbReference type="PDBsum" id="4M9Z"/>
<dbReference type="PDBsum" id="8JNS"/>
<dbReference type="PDBsum" id="8JO0"/>
<dbReference type="PDBsum" id="8JOL"/>
<dbReference type="EMDB" id="EMD-36450"/>
<dbReference type="EMDB" id="EMD-36451"/>
<dbReference type="EMDB" id="EMD-36459"/>
<dbReference type="SMR" id="P30429"/>
<dbReference type="BioGRID" id="40877">
    <property type="interactions" value="17"/>
</dbReference>
<dbReference type="ComplexPortal" id="CPX-1358">
    <property type="entry name" value="ced-3-ced-4-mac-1 complex"/>
</dbReference>
<dbReference type="ComplexPortal" id="CPX-1359">
    <property type="entry name" value="ced-4-ced-9-mac-1 complex"/>
</dbReference>
<dbReference type="ComplexPortal" id="CPX-1360">
    <property type="entry name" value="ced-3-ced-4 caspase complex"/>
</dbReference>
<dbReference type="ComplexPortal" id="CPX-399">
    <property type="entry name" value="ced-9-ced-4 complex"/>
</dbReference>
<dbReference type="DIP" id="DIP-1016N"/>
<dbReference type="FunCoup" id="P30429">
    <property type="interactions" value="20"/>
</dbReference>
<dbReference type="IntAct" id="P30429">
    <property type="interactions" value="7"/>
</dbReference>
<dbReference type="STRING" id="6239.C35D10.9b.2"/>
<dbReference type="PaxDb" id="6239-C35D10.9b"/>
<dbReference type="PeptideAtlas" id="P30429"/>
<dbReference type="EnsemblMetazoa" id="C35D10.9a.1">
    <molecule id="P30429-2"/>
    <property type="protein sequence ID" value="C35D10.9a.1"/>
    <property type="gene ID" value="WBGene00000418"/>
</dbReference>
<dbReference type="EnsemblMetazoa" id="C35D10.9b.1">
    <molecule id="P30429-1"/>
    <property type="protein sequence ID" value="C35D10.9b.1"/>
    <property type="gene ID" value="WBGene00000418"/>
</dbReference>
<dbReference type="GeneID" id="175643"/>
<dbReference type="KEGG" id="cel:CELE_C35D10.9"/>
<dbReference type="UCSC" id="C35D10.9b">
    <molecule id="P30429-2"/>
    <property type="organism name" value="c. elegans"/>
</dbReference>
<dbReference type="AGR" id="WB:WBGene00000418"/>
<dbReference type="CTD" id="175643"/>
<dbReference type="WormBase" id="C35D10.9a">
    <molecule id="P30429-2"/>
    <property type="protein sequence ID" value="CE01203"/>
    <property type="gene ID" value="WBGene00000418"/>
    <property type="gene designation" value="ced-4"/>
</dbReference>
<dbReference type="WormBase" id="C35D10.9b">
    <molecule id="P30429-1"/>
    <property type="protein sequence ID" value="CE38154"/>
    <property type="gene ID" value="WBGene00000418"/>
    <property type="gene designation" value="ced-4"/>
</dbReference>
<dbReference type="eggNOG" id="KOG4658">
    <property type="taxonomic scope" value="Eukaryota"/>
</dbReference>
<dbReference type="HOGENOM" id="CLU_496380_0_0_1"/>
<dbReference type="InParanoid" id="P30429"/>
<dbReference type="OMA" id="TDSCIFM"/>
<dbReference type="OrthoDB" id="1357022at2759"/>
<dbReference type="PhylomeDB" id="P30429"/>
<dbReference type="SignaLink" id="P30429"/>
<dbReference type="EvolutionaryTrace" id="P30429"/>
<dbReference type="PRO" id="PR:P30429"/>
<dbReference type="Proteomes" id="UP000001940">
    <property type="component" value="Chromosome III"/>
</dbReference>
<dbReference type="Bgee" id="WBGene00000418">
    <property type="expression patterns" value="Expressed in germ line (C elegans) and 4 other cell types or tissues"/>
</dbReference>
<dbReference type="GO" id="GO:0008303">
    <property type="term" value="C:caspase complex"/>
    <property type="evidence" value="ECO:0000314"/>
    <property type="project" value="ComplexPortal"/>
</dbReference>
<dbReference type="GO" id="GO:0005829">
    <property type="term" value="C:cytosol"/>
    <property type="evidence" value="ECO:0000314"/>
    <property type="project" value="UniProtKB"/>
</dbReference>
<dbReference type="GO" id="GO:0016020">
    <property type="term" value="C:membrane"/>
    <property type="evidence" value="ECO:0000314"/>
    <property type="project" value="WormBase"/>
</dbReference>
<dbReference type="GO" id="GO:0005739">
    <property type="term" value="C:mitochondrion"/>
    <property type="evidence" value="ECO:0000314"/>
    <property type="project" value="UniProtKB"/>
</dbReference>
<dbReference type="GO" id="GO:0005634">
    <property type="term" value="C:nucleus"/>
    <property type="evidence" value="ECO:0000314"/>
    <property type="project" value="UniProtKB"/>
</dbReference>
<dbReference type="GO" id="GO:0048471">
    <property type="term" value="C:perinuclear region of cytoplasm"/>
    <property type="evidence" value="ECO:0000314"/>
    <property type="project" value="WormBase"/>
</dbReference>
<dbReference type="GO" id="GO:0032991">
    <property type="term" value="C:protein-containing complex"/>
    <property type="evidence" value="ECO:0000314"/>
    <property type="project" value="UniProtKB"/>
</dbReference>
<dbReference type="GO" id="GO:0043531">
    <property type="term" value="F:ADP binding"/>
    <property type="evidence" value="ECO:0007669"/>
    <property type="project" value="InterPro"/>
</dbReference>
<dbReference type="GO" id="GO:0005524">
    <property type="term" value="F:ATP binding"/>
    <property type="evidence" value="ECO:0000314"/>
    <property type="project" value="WormBase"/>
</dbReference>
<dbReference type="GO" id="GO:0051432">
    <property type="term" value="F:BH1 domain binding"/>
    <property type="evidence" value="ECO:0000353"/>
    <property type="project" value="WormBase"/>
</dbReference>
<dbReference type="GO" id="GO:0051434">
    <property type="term" value="F:BH3 domain binding"/>
    <property type="evidence" value="ECO:0000353"/>
    <property type="project" value="WormBase"/>
</dbReference>
<dbReference type="GO" id="GO:0089720">
    <property type="term" value="F:caspase binding"/>
    <property type="evidence" value="ECO:0000353"/>
    <property type="project" value="UniProtKB"/>
</dbReference>
<dbReference type="GO" id="GO:0140608">
    <property type="term" value="F:cysteine-type endopeptidase activator activity"/>
    <property type="evidence" value="ECO:0000314"/>
    <property type="project" value="UniProtKB"/>
</dbReference>
<dbReference type="GO" id="GO:0008656">
    <property type="term" value="F:cysteine-type endopeptidase activator activity involved in apoptotic process"/>
    <property type="evidence" value="ECO:0000315"/>
    <property type="project" value="UniProtKB"/>
</dbReference>
<dbReference type="GO" id="GO:0061133">
    <property type="term" value="F:endopeptidase activator activity"/>
    <property type="evidence" value="ECO:0000314"/>
    <property type="project" value="WormBase"/>
</dbReference>
<dbReference type="GO" id="GO:0042802">
    <property type="term" value="F:identical protein binding"/>
    <property type="evidence" value="ECO:0000353"/>
    <property type="project" value="UniProtKB"/>
</dbReference>
<dbReference type="GO" id="GO:0000287">
    <property type="term" value="F:magnesium ion binding"/>
    <property type="evidence" value="ECO:0000314"/>
    <property type="project" value="UniProtKB"/>
</dbReference>
<dbReference type="GO" id="GO:0016505">
    <property type="term" value="F:peptidase activator activity involved in apoptotic process"/>
    <property type="evidence" value="ECO:0000314"/>
    <property type="project" value="WormBase"/>
</dbReference>
<dbReference type="GO" id="GO:0030042">
    <property type="term" value="P:actin filament depolymerization"/>
    <property type="evidence" value="ECO:0000315"/>
    <property type="project" value="UniProtKB"/>
</dbReference>
<dbReference type="GO" id="GO:0006915">
    <property type="term" value="P:apoptotic process"/>
    <property type="evidence" value="ECO:0000315"/>
    <property type="project" value="UniProtKB"/>
</dbReference>
<dbReference type="GO" id="GO:1902742">
    <property type="term" value="P:apoptotic process involved in development"/>
    <property type="evidence" value="ECO:0000315"/>
    <property type="project" value="UniProtKB"/>
</dbReference>
<dbReference type="GO" id="GO:0050829">
    <property type="term" value="P:defense response to Gram-negative bacterium"/>
    <property type="evidence" value="ECO:0000315"/>
    <property type="project" value="UniProtKB"/>
</dbReference>
<dbReference type="GO" id="GO:0009792">
    <property type="term" value="P:embryo development ending in birth or egg hatching"/>
    <property type="evidence" value="ECO:0000316"/>
    <property type="project" value="WormBase"/>
</dbReference>
<dbReference type="GO" id="GO:0048598">
    <property type="term" value="P:embryonic morphogenesis"/>
    <property type="evidence" value="ECO:0000316"/>
    <property type="project" value="WormBase"/>
</dbReference>
<dbReference type="GO" id="GO:0046716">
    <property type="term" value="P:muscle cell cellular homeostasis"/>
    <property type="evidence" value="ECO:0000316"/>
    <property type="project" value="UniProtKB"/>
</dbReference>
<dbReference type="GO" id="GO:0043066">
    <property type="term" value="P:negative regulation of apoptotic process"/>
    <property type="evidence" value="ECO:0000314"/>
    <property type="project" value="UniProtKB"/>
</dbReference>
<dbReference type="GO" id="GO:1900118">
    <property type="term" value="P:negative regulation of execution phase of apoptosis"/>
    <property type="evidence" value="ECO:0000315"/>
    <property type="project" value="ComplexPortal"/>
</dbReference>
<dbReference type="GO" id="GO:0043065">
    <property type="term" value="P:positive regulation of apoptotic process"/>
    <property type="evidence" value="ECO:0000314"/>
    <property type="project" value="UniProtKB"/>
</dbReference>
<dbReference type="GO" id="GO:1904747">
    <property type="term" value="P:positive regulation of apoptotic process involved in development"/>
    <property type="evidence" value="ECO:0000315"/>
    <property type="project" value="UniProtKB"/>
</dbReference>
<dbReference type="GO" id="GO:0010954">
    <property type="term" value="P:positive regulation of protein processing"/>
    <property type="evidence" value="ECO:0000314"/>
    <property type="project" value="UniProtKB"/>
</dbReference>
<dbReference type="GO" id="GO:1905808">
    <property type="term" value="P:positive regulation of synapse pruning"/>
    <property type="evidence" value="ECO:0000315"/>
    <property type="project" value="UniProtKB"/>
</dbReference>
<dbReference type="GO" id="GO:0030155">
    <property type="term" value="P:regulation of cell adhesion"/>
    <property type="evidence" value="ECO:0000315"/>
    <property type="project" value="UniProtKB"/>
</dbReference>
<dbReference type="GO" id="GO:0008361">
    <property type="term" value="P:regulation of cell size"/>
    <property type="evidence" value="ECO:0000316"/>
    <property type="project" value="WormBase"/>
</dbReference>
<dbReference type="GO" id="GO:0040034">
    <property type="term" value="P:regulation of development, heterochronic"/>
    <property type="evidence" value="ECO:0000316"/>
    <property type="project" value="UniProtKB"/>
</dbReference>
<dbReference type="GO" id="GO:0031647">
    <property type="term" value="P:regulation of protein stability"/>
    <property type="evidence" value="ECO:0000316"/>
    <property type="project" value="UniProtKB"/>
</dbReference>
<dbReference type="DisProt" id="DP03045">
    <molecule id="P30429-2"/>
</dbReference>
<dbReference type="FunFam" id="1.10.10.10:FF:001358">
    <property type="entry name" value="Cell death protein 4"/>
    <property type="match status" value="1"/>
</dbReference>
<dbReference type="FunFam" id="1.10.533.10:FF:000156">
    <property type="entry name" value="Cell death protein 4"/>
    <property type="match status" value="1"/>
</dbReference>
<dbReference type="FunFam" id="1.10.8.490:FF:000001">
    <property type="entry name" value="Cell death protein 4"/>
    <property type="match status" value="1"/>
</dbReference>
<dbReference type="Gene3D" id="1.10.8.490">
    <property type="entry name" value="Ced-4 linker helical domain-like"/>
    <property type="match status" value="1"/>
</dbReference>
<dbReference type="Gene3D" id="1.10.533.10">
    <property type="entry name" value="Death Domain, Fas"/>
    <property type="match status" value="1"/>
</dbReference>
<dbReference type="Gene3D" id="3.40.50.300">
    <property type="entry name" value="P-loop containing nucleotide triphosphate hydrolases"/>
    <property type="match status" value="1"/>
</dbReference>
<dbReference type="Gene3D" id="1.10.10.10">
    <property type="entry name" value="Winged helix-like DNA-binding domain superfamily/Winged helix DNA-binding domain"/>
    <property type="match status" value="1"/>
</dbReference>
<dbReference type="InterPro" id="IPR001315">
    <property type="entry name" value="CARD"/>
</dbReference>
<dbReference type="InterPro" id="IPR054317">
    <property type="entry name" value="CED4_WHD"/>
</dbReference>
<dbReference type="InterPro" id="IPR011029">
    <property type="entry name" value="DEATH-like_dom_sf"/>
</dbReference>
<dbReference type="InterPro" id="IPR002182">
    <property type="entry name" value="NB-ARC"/>
</dbReference>
<dbReference type="InterPro" id="IPR027417">
    <property type="entry name" value="P-loop_NTPase"/>
</dbReference>
<dbReference type="InterPro" id="IPR036388">
    <property type="entry name" value="WH-like_DNA-bd_sf"/>
</dbReference>
<dbReference type="InterPro" id="IPR036390">
    <property type="entry name" value="WH_DNA-bd_sf"/>
</dbReference>
<dbReference type="PANTHER" id="PTHR22845">
    <property type="entry name" value="APOPTOTIC PROTEASE-ACTIVATING FACTOR 1"/>
    <property type="match status" value="1"/>
</dbReference>
<dbReference type="PANTHER" id="PTHR22845:SF5">
    <property type="entry name" value="APOPTOTIC PROTEASE-ACTIVATING FACTOR 1"/>
    <property type="match status" value="1"/>
</dbReference>
<dbReference type="Pfam" id="PF00619">
    <property type="entry name" value="CARD"/>
    <property type="match status" value="1"/>
</dbReference>
<dbReference type="Pfam" id="PF22094">
    <property type="entry name" value="CED4_WHD"/>
    <property type="match status" value="1"/>
</dbReference>
<dbReference type="Pfam" id="PF00931">
    <property type="entry name" value="NB-ARC"/>
    <property type="match status" value="1"/>
</dbReference>
<dbReference type="SMART" id="SM00114">
    <property type="entry name" value="CARD"/>
    <property type="match status" value="1"/>
</dbReference>
<dbReference type="SUPFAM" id="SSF47986">
    <property type="entry name" value="DEATH domain"/>
    <property type="match status" value="1"/>
</dbReference>
<dbReference type="SUPFAM" id="SSF52540">
    <property type="entry name" value="P-loop containing nucleoside triphosphate hydrolases"/>
    <property type="match status" value="1"/>
</dbReference>
<dbReference type="SUPFAM" id="SSF46785">
    <property type="entry name" value="Winged helix' DNA-binding domain"/>
    <property type="match status" value="1"/>
</dbReference>
<dbReference type="PROSITE" id="PS50209">
    <property type="entry name" value="CARD"/>
    <property type="match status" value="1"/>
</dbReference>
<keyword id="KW-0002">3D-structure</keyword>
<keyword id="KW-0025">Alternative splicing</keyword>
<keyword id="KW-0053">Apoptosis</keyword>
<keyword id="KW-0067">ATP-binding</keyword>
<keyword id="KW-0963">Cytoplasm</keyword>
<keyword id="KW-0460">Magnesium</keyword>
<keyword id="KW-0479">Metal-binding</keyword>
<keyword id="KW-0496">Mitochondrion</keyword>
<keyword id="KW-0547">Nucleotide-binding</keyword>
<keyword id="KW-1185">Reference proteome</keyword>
<evidence type="ECO:0000255" key="1"/>
<evidence type="ECO:0000255" key="2">
    <source>
        <dbReference type="PROSITE-ProRule" id="PRU00046"/>
    </source>
</evidence>
<evidence type="ECO:0000269" key="3">
    <source>
    </source>
</evidence>
<evidence type="ECO:0000269" key="4">
    <source>
    </source>
</evidence>
<evidence type="ECO:0000269" key="5">
    <source>
    </source>
</evidence>
<evidence type="ECO:0000269" key="6">
    <source>
    </source>
</evidence>
<evidence type="ECO:0000269" key="7">
    <source>
    </source>
</evidence>
<evidence type="ECO:0000269" key="8">
    <source>
    </source>
</evidence>
<evidence type="ECO:0000269" key="9">
    <source>
    </source>
</evidence>
<evidence type="ECO:0000269" key="10">
    <source>
    </source>
</evidence>
<evidence type="ECO:0000269" key="11">
    <source>
    </source>
</evidence>
<evidence type="ECO:0000269" key="12">
    <source>
    </source>
</evidence>
<evidence type="ECO:0000269" key="13">
    <source>
    </source>
</evidence>
<evidence type="ECO:0000269" key="14">
    <source>
    </source>
</evidence>
<evidence type="ECO:0000269" key="15">
    <source>
    </source>
</evidence>
<evidence type="ECO:0000269" key="16">
    <source>
    </source>
</evidence>
<evidence type="ECO:0000269" key="17">
    <source>
    </source>
</evidence>
<evidence type="ECO:0000269" key="18">
    <source>
    </source>
</evidence>
<evidence type="ECO:0000269" key="19">
    <source>
    </source>
</evidence>
<evidence type="ECO:0000269" key="20">
    <source>
    </source>
</evidence>
<evidence type="ECO:0000269" key="21">
    <source>
    </source>
</evidence>
<evidence type="ECO:0000269" key="22">
    <source>
    </source>
</evidence>
<evidence type="ECO:0000269" key="23">
    <source>
    </source>
</evidence>
<evidence type="ECO:0000303" key="24">
    <source>
    </source>
</evidence>
<evidence type="ECO:0000312" key="25">
    <source>
        <dbReference type="WormBase" id="C35D10.9a"/>
    </source>
</evidence>
<evidence type="ECO:0000312" key="26">
    <source>
        <dbReference type="WormBase" id="C35D10.9b"/>
    </source>
</evidence>
<evidence type="ECO:0007744" key="27">
    <source>
        <dbReference type="PDB" id="2A5Y"/>
    </source>
</evidence>
<evidence type="ECO:0007744" key="28">
    <source>
        <dbReference type="PDB" id="3LQQ"/>
    </source>
</evidence>
<evidence type="ECO:0007744" key="29">
    <source>
        <dbReference type="PDB" id="3LQR"/>
    </source>
</evidence>
<evidence type="ECO:0007744" key="30">
    <source>
        <dbReference type="PDB" id="4M9S"/>
    </source>
</evidence>
<evidence type="ECO:0007744" key="31">
    <source>
        <dbReference type="PDB" id="4M9X"/>
    </source>
</evidence>
<evidence type="ECO:0007744" key="32">
    <source>
        <dbReference type="PDB" id="4M9Y"/>
    </source>
</evidence>
<evidence type="ECO:0007744" key="33">
    <source>
        <dbReference type="PDB" id="4M9Z"/>
    </source>
</evidence>
<evidence type="ECO:0007744" key="34">
    <source>
        <dbReference type="PDB" id="8JNS"/>
    </source>
</evidence>
<evidence type="ECO:0007744" key="35">
    <source>
        <dbReference type="PDB" id="8JO0"/>
    </source>
</evidence>
<evidence type="ECO:0007744" key="36">
    <source>
        <dbReference type="PDB" id="8JOL"/>
    </source>
</evidence>
<evidence type="ECO:0007829" key="37">
    <source>
        <dbReference type="PDB" id="2A5Y"/>
    </source>
</evidence>
<evidence type="ECO:0007829" key="38">
    <source>
        <dbReference type="PDB" id="4M9S"/>
    </source>
</evidence>
<evidence type="ECO:0007829" key="39">
    <source>
        <dbReference type="PDB" id="4M9Z"/>
    </source>
</evidence>
<evidence type="ECO:0007829" key="40">
    <source>
        <dbReference type="PDB" id="8JOL"/>
    </source>
</evidence>
<organism>
    <name type="scientific">Caenorhabditis elegans</name>
    <dbReference type="NCBI Taxonomy" id="6239"/>
    <lineage>
        <taxon>Eukaryota</taxon>
        <taxon>Metazoa</taxon>
        <taxon>Ecdysozoa</taxon>
        <taxon>Nematoda</taxon>
        <taxon>Chromadorea</taxon>
        <taxon>Rhabditida</taxon>
        <taxon>Rhabditina</taxon>
        <taxon>Rhabditomorpha</taxon>
        <taxon>Rhabditoidea</taxon>
        <taxon>Rhabditidae</taxon>
        <taxon>Peloderinae</taxon>
        <taxon>Caenorhabditis</taxon>
    </lineage>
</organism>
<name>CED4_CAEEL</name>
<comment type="function">
    <text evidence="5 6 11 13 14 15 17 18 20 23">Component of the egl-1, ced-9, ced-4 and ced-3 apoptotic signaling cascade required for the initiation of programmed cell death in cells fated to die during embryonic and postembryonic development (PubMed:3955651). During oogenesis, required for germline apoptosis downstream of ced-9 and upstream of ced-3 but independently of egl-1 (PubMed:9927601). May regulate germline apoptosis in response to DNA damage, probably downstream of let-60/ras and mpk-1 pathway (PubMed:21901106). Regulates CEP neuron apoptosis in response to high Al(3+) levels (PubMed:23106139). During male tail morphogenesis, promotes apoptosis of the tail-spike cell upstream of ced-3 but independently of egl-1 and ced-9 (PubMed:17329362). May play a role in sex-specific cell apoptosis, probably by promoting ced-3-mediated cleavage of sex-determining protein fem-1 (PubMed:10764728). During larval development, required for the elimination of transient presynaptic components downstream of egl-1 and ced-9 and upstream of ced-3 apoptotic pathway (PubMed:26074078). Downstream of calreticulin crt-1 and upstream of ced-3 and independently of egl-1 and ced-9, plays a role in the initial steps of axonal regrowth following axotomy (PubMed:22629231). Together with ain-1, a component of the miRNA-induced-silencing complex (miRISC), and probably upstream of ced-3, regulates temporal cell fate patterning during larval development (PubMed:25432023). May play a role in resistance to S.typhimurium-mediated infection (PubMed:11226309).</text>
</comment>
<comment type="function">
    <molecule>Isoform a</molecule>
    <text evidence="4 7 9 10 12 16 19 21">Plays a major role in programmed cell death (PubMed:1286611, PubMed:8706125). egl-1 binds to and directly inhibits the activity of ced-9, releasing the cell death activator ced-4 from a ced-9/ced-4-containing protein complex and allowing ced-4 to induce caspase ced-3 autoproteolytic cleavage and activation (PubMed:15383288, PubMed:16208361, PubMed:20434985, PubMed:24065769, PubMed:37402593). Also forms a holoenzyme with processed ced-3 enhancing ced-3 activity (PubMed:20434985).</text>
</comment>
<comment type="function">
    <molecule>Isoform b</molecule>
    <text evidence="21">Prevents programmed cell death.</text>
</comment>
<comment type="subunit">
    <text evidence="3 5 9 10 12 16 19 22">Associates as an asymmetric homodimer with ced-9 (PubMed:15383288, PubMed:16208361, PubMed:9027313). Only one ced-4 molecule within the dimer interacts directly with ced-9 (PubMed:16208361). Upon release from ced-9, forms a multimer, known as the apoptosome, and interacts with ced-3; the interaction results in ced-3 autoproteolytic cleavage and activation (PubMed:20434985, PubMed:24065769). Multiple oligomeric states of the apoptosome are observed including hexamers, heptamers and octamers (PubMed:37402593). The hexamers likely represent a pre-mature state of the apoptosome and may contribute to the regulation of ced-3 activation (PubMed:37402593). The apoptosome multimer also interacts with two processed ced-3 to form a stable holoenzyme (PubMed:20434985). Interacts with sex-determining protein fem-1 (PubMed:10764728). May form a complex composed of ced-3, ced-4 and mac-1 or of ced-9, ced-4 and mac-1 (PubMed:10101135). Within the complex, interacts with mac-1 (PubMed:10101135).</text>
</comment>
<comment type="interaction">
    <interactant intactId="EBI-494118">
        <id>P30429</id>
    </interactant>
    <interactant intactId="EBI-494247">
        <id>P42573</id>
        <label>ced-3</label>
    </interactant>
    <organismsDiffer>false</organismsDiffer>
    <experiments>10</experiments>
</comment>
<comment type="interaction">
    <interactant intactId="EBI-494118">
        <id>P30429</id>
    </interactant>
    <interactant intactId="EBI-494110">
        <id>P41958</id>
        <label>ced-9</label>
    </interactant>
    <organismsDiffer>false</organismsDiffer>
    <experiments>17</experiments>
</comment>
<comment type="interaction">
    <interactant intactId="EBI-494118">
        <id>P30429</id>
    </interactant>
    <interactant intactId="EBI-15599048">
        <id>Q20924</id>
        <label>sun-1</label>
    </interactant>
    <organismsDiffer>false</organismsDiffer>
    <experiments>3</experiments>
</comment>
<comment type="interaction">
    <interactant intactId="EBI-536271">
        <id>P30429-2</id>
    </interactant>
    <interactant intactId="EBI-494247">
        <id>P42573</id>
        <label>ced-3</label>
    </interactant>
    <organismsDiffer>false</organismsDiffer>
    <experiments>13</experiments>
</comment>
<comment type="interaction">
    <interactant intactId="EBI-536271">
        <id>P30429-2</id>
    </interactant>
    <interactant intactId="EBI-494110">
        <id>P41958</id>
        <label>ced-9</label>
    </interactant>
    <organismsDiffer>false</organismsDiffer>
    <experiments>5</experiments>
</comment>
<comment type="interaction">
    <interactant intactId="EBI-536271">
        <id>P30429-2</id>
    </interactant>
    <interactant intactId="EBI-2005767">
        <id>Q9NAG4</id>
        <label>mac-1</label>
    </interactant>
    <organismsDiffer>false</organismsDiffer>
    <experiments>8</experiments>
</comment>
<comment type="interaction">
    <interactant intactId="EBI-536271">
        <id>P30429-2</id>
    </interactant>
    <interactant intactId="EBI-287195">
        <id>Q07817-1</id>
        <label>BCL2L1</label>
    </interactant>
    <organismsDiffer>true</organismsDiffer>
    <experiments>2</experiments>
</comment>
<comment type="subcellular location">
    <subcellularLocation>
        <location evidence="4 22">Mitochondrion</location>
    </subcellularLocation>
    <subcellularLocation>
        <location evidence="4 22">Cytoplasm</location>
        <location evidence="4 22">Perinuclear region</location>
    </subcellularLocation>
    <text evidence="4 22">In non cell death induced cells, ced-9 is required for mitochondrial localization. Perinuclear in cell death induced cells.</text>
</comment>
<comment type="alternative products">
    <event type="alternative splicing"/>
    <isoform>
        <id>P30429-2</id>
        <name evidence="25">a</name>
        <name evidence="24">ced-4S</name>
        <name evidence="24">ced-4 short</name>
        <sequence type="displayed"/>
    </isoform>
    <isoform>
        <id>P30429-1</id>
        <name evidence="26">b</name>
        <name evidence="24">ced-4L</name>
        <name evidence="24">ced-4 long</name>
        <sequence type="described" ref="VSP_062416"/>
    </isoform>
</comment>
<comment type="developmental stage">
    <text evidence="7 22">Abundantly expressed during embryogenesis and to a lesser extent in larvae and adults (PubMed:1286611). Expression starts at the 100-cell stage and persists through embryogenesis (at protein level) (PubMed:9027313). Not expressed in larvae and adults (at protein level) (PubMed:9027313).</text>
</comment>
<comment type="disruption phenotype">
    <text evidence="7 15 17">Mutants exhibit a block in almost all programmed cell deaths that normally occur during development (PubMed:1286611). RNAi-mediated knockdown causes a defect in egg laying in a small proportion of animals (PubMed:25432023). Also causes a moderate increase in CEP neuron survival in response to high Al(3+) levels (PubMed:23106139). In an ain-1 mutant background, enhances the proportion of animals arrested at the larval stage, with egg-laying defects and with a ruptured vulva (PubMed:25432023).</text>
</comment>
<accession>P30429</accession>
<accession>Q5BHI5</accession>
<reference key="1">
    <citation type="journal article" date="1992" name="Development">
        <title>The Caenorhabditis elegans cell death gene ced-4 encodes a novel protein and is expressed during the period of extensive programmed cell death.</title>
        <authorList>
            <person name="Yuan J."/>
            <person name="Horvitz H.R."/>
        </authorList>
    </citation>
    <scope>NUCLEOTIDE SEQUENCE [GENOMIC DNA] (ISOFORM A)</scope>
    <scope>FUNCTION</scope>
    <scope>DEVELOPMENTAL STAGE</scope>
    <scope>DISRUPTION PHENOTYPE</scope>
</reference>
<reference key="2">
    <citation type="journal article" date="1998" name="Science">
        <title>Genome sequence of the nematode C. elegans: a platform for investigating biology.</title>
        <authorList>
            <consortium name="The C. elegans sequencing consortium"/>
        </authorList>
    </citation>
    <scope>NUCLEOTIDE SEQUENCE [LARGE SCALE GENOMIC DNA]</scope>
    <source>
        <strain>Bristol N2</strain>
    </source>
</reference>
<reference key="3">
    <citation type="journal article" date="1986" name="Cell">
        <title>Genetic control of programmed cell death in the nematode C. elegans.</title>
        <authorList>
            <person name="Ellis H.M."/>
            <person name="Horvitz H.R."/>
        </authorList>
    </citation>
    <scope>FUNCTION</scope>
</reference>
<reference key="4">
    <citation type="journal article" date="1996" name="Cell">
        <title>An alternatively spliced C. elegans ced-4 RNA encodes a novel cell death inhibitor.</title>
        <authorList>
            <person name="Shaham S."/>
            <person name="Horvitz H.R."/>
        </authorList>
    </citation>
    <scope>FUNCTION</scope>
    <scope>ALTERNATIVE SPLICING</scope>
</reference>
<reference key="5">
    <citation type="journal article" date="1997" name="Science">
        <title>Interaction and regulation of subcellular localization of CED-4 by CED-9.</title>
        <authorList>
            <person name="Wu D."/>
            <person name="Wallen H.D."/>
            <person name="Nunez G."/>
        </authorList>
    </citation>
    <scope>SUBCELLULAR LOCATION</scope>
    <scope>DEVELOPMENTAL STAGE</scope>
    <scope>INTERACTION WITH CED-9</scope>
</reference>
<reference key="6">
    <citation type="journal article" date="1999" name="Development">
        <title>Genetic control of programmed cell death in the Caenorhabditis elegans hermaphrodite germline.</title>
        <authorList>
            <person name="Gumienny T.L."/>
            <person name="Lambie E."/>
            <person name="Hartwieg E."/>
            <person name="Horvitz H.R."/>
            <person name="Hengartner M.O."/>
        </authorList>
    </citation>
    <scope>FUNCTION</scope>
</reference>
<reference key="7">
    <citation type="journal article" date="1999" name="Development">
        <title>C. elegans MAC-1, an essential member of the AAA family of ATPases, can bind CED-4 and prevent cell death.</title>
        <authorList>
            <person name="Wu D."/>
            <person name="Chen P.J."/>
            <person name="Chen S."/>
            <person name="Hu Y."/>
            <person name="Nunez G."/>
            <person name="Ellis R.E."/>
        </authorList>
    </citation>
    <scope>INTERACTION WITH MAC-1</scope>
    <scope>MUTAGENESIS OF ILE-258</scope>
</reference>
<reference key="8">
    <citation type="journal article" date="2000" name="J. Biol. Chem.">
        <title>The Caenorhabditis elegans sex determination protein FEM-1 is a CED-3 substrate that associates with CED-4 and mediates apoptosis in mammalian cells.</title>
        <authorList>
            <person name="Chan S.L."/>
            <person name="Yee K.S."/>
            <person name="Tan K.M."/>
            <person name="Yu V.C."/>
        </authorList>
    </citation>
    <scope>FUNCTION</scope>
    <scope>INTERACTION WITH FEM-1</scope>
</reference>
<reference key="9">
    <citation type="journal article" date="2000" name="Science">
        <title>Translocation of C. elegans CED-4 to nuclear membranes during programmed cell death.</title>
        <authorList>
            <person name="Chen F."/>
            <person name="Hersh B.M."/>
            <person name="Conradt B."/>
            <person name="Zhou Z."/>
            <person name="Riemer D."/>
            <person name="Gruenbaum Y."/>
            <person name="Horvitz H.R."/>
        </authorList>
    </citation>
    <scope>FUNCTION</scope>
    <scope>SUBCELLULAR LOCATION</scope>
</reference>
<reference key="10">
    <citation type="journal article" date="2001" name="Proc. Natl. Acad. Sci. U.S.A.">
        <title>Programmed cell death mediated by ced-3 and ced-4 protects Caenorhabditis elegans from Salmonella typhimurium-mediated killing.</title>
        <authorList>
            <person name="Aballay A."/>
            <person name="Ausubel F.M."/>
        </authorList>
    </citation>
    <scope>FUNCTION</scope>
</reference>
<reference key="11">
    <citation type="journal article" date="2003" name="Nature">
        <title>Suppression of CED-3-independent apoptosis by mitochondrial betaNAC in Caenorhabditis elegans.</title>
        <authorList>
            <person name="Bloss T.A."/>
            <person name="Witze E.S."/>
            <person name="Rothman J.H."/>
        </authorList>
    </citation>
    <scope>MUTAGENESIS OF 80-GLN--CYS-549</scope>
</reference>
<reference key="12">
    <citation type="journal article" date="2004" name="Mol. Cell">
        <title>Structural, biochemical, and functional analyses of CED-9 recognition by the proapoptotic proteins EGL-1 and CED-4.</title>
        <authorList>
            <person name="Yan N."/>
            <person name="Gu L."/>
            <person name="Kokel D."/>
            <person name="Chai J."/>
            <person name="Li W."/>
            <person name="Han A."/>
            <person name="Chen L."/>
            <person name="Xue D."/>
            <person name="Shi Y."/>
        </authorList>
    </citation>
    <scope>FUNCTION</scope>
    <scope>INTERACTION WITH CED-9</scope>
</reference>
<reference key="13">
    <citation type="journal article" date="2007" name="Development">
        <title>Timing of the onset of a developmental cell death is controlled by transcriptional induction of the C. elegans ced-3 caspase-encoding gene.</title>
        <authorList>
            <person name="Maurer C.W."/>
            <person name="Chiorazzi M."/>
            <person name="Shaham S."/>
        </authorList>
    </citation>
    <scope>FUNCTION</scope>
</reference>
<reference key="14">
    <citation type="journal article" date="2011" name="PLoS Genet.">
        <title>Regulation of Caenorhabditis elegans p53/CEP-1-dependent germ cell apoptosis by Ras/MAPK signaling.</title>
        <authorList>
            <person name="Rutkowski R."/>
            <person name="Dickinson R."/>
            <person name="Stewart G."/>
            <person name="Craig A."/>
            <person name="Schimpl M."/>
            <person name="Keyse S.M."/>
            <person name="Gartner A."/>
        </authorList>
    </citation>
    <scope>FUNCTION</scope>
</reference>
<reference key="15">
    <citation type="journal article" date="2012" name="PLoS Biol.">
        <title>The core apoptotic executioner proteins CED-3 and CED-4 promote initiation of neuronal regeneration in Caenorhabditis elegans.</title>
        <authorList>
            <person name="Pinan-Lucarre B."/>
            <person name="Gabel C.V."/>
            <person name="Reina C.P."/>
            <person name="Hulme S.E."/>
            <person name="Shevkoplyas S.S."/>
            <person name="Slone R.D."/>
            <person name="Xue J."/>
            <person name="Qiao Y."/>
            <person name="Weisberg S."/>
            <person name="Roodhouse K."/>
            <person name="Sun L."/>
            <person name="Whitesides G.M."/>
            <person name="Samuel A."/>
            <person name="Driscoll M."/>
        </authorList>
    </citation>
    <scope>FUNCTION</scope>
</reference>
<reference key="16">
    <citation type="journal article" date="2013" name="J. Neurochem.">
        <title>The metal transporter SMF-3/DMT-1 mediates aluminum-induced dopamine neuron degeneration.</title>
        <authorList>
            <person name="VanDuyn N."/>
            <person name="Settivari R."/>
            <person name="LeVora J."/>
            <person name="Zhou S."/>
            <person name="Unrine J."/>
            <person name="Nass R."/>
        </authorList>
    </citation>
    <scope>FUNCTION</scope>
    <scope>DISRUPTION PHENOTYPE</scope>
</reference>
<reference key="17">
    <citation type="journal article" date="2014" name="Elife">
        <title>CED-3 caspase acts with miRNAs to regulate non-apoptotic gene expression dynamics for robust development in C. elegans.</title>
        <authorList>
            <person name="Weaver B.P."/>
            <person name="Zabinsky R."/>
            <person name="Weaver Y.M."/>
            <person name="Lee E.S."/>
            <person name="Xue D."/>
            <person name="Han M."/>
        </authorList>
    </citation>
    <scope>FUNCTION</scope>
    <scope>DISRUPTION PHENOTYPE</scope>
</reference>
<reference key="18">
    <citation type="journal article" date="2015" name="Cell Rep.">
        <title>The cell death pathway regulates synapse elimination through cleavage of gelsolin in Caenorhabditis elegans neurons.</title>
        <authorList>
            <person name="Meng L."/>
            <person name="Mulcahy B."/>
            <person name="Cook S.J."/>
            <person name="Neubauer M."/>
            <person name="Wan A."/>
            <person name="Jin Y."/>
            <person name="Yan D."/>
        </authorList>
    </citation>
    <scope>FUNCTION</scope>
</reference>
<reference evidence="27" key="19">
    <citation type="journal article" date="2005" name="Nature">
        <title>Structure of the CED-4-CED-9 complex provides insights into programmed cell death in Caenorhabditis elegans.</title>
        <authorList>
            <person name="Yan N."/>
            <person name="Chai J."/>
            <person name="Lee E.S."/>
            <person name="Gu L."/>
            <person name="Liu Q."/>
            <person name="He J."/>
            <person name="Wu J.W."/>
            <person name="Kokel D."/>
            <person name="Li H."/>
            <person name="Hao Q."/>
            <person name="Xue D."/>
            <person name="Shi Y."/>
        </authorList>
    </citation>
    <scope>X-RAY CRYSTALLOGRAPHY (2.60 ANGSTROMS) OF ISOFORM A IN COMPLEX WITH CED-9; ATP AND MAGNESIUM</scope>
    <scope>FUNCTION</scope>
    <scope>MUTAGENESIS OF VAL-230; ARG-233; MET-234 AND 250-ASP-ASP-251</scope>
</reference>
<reference evidence="28 29" key="20">
    <citation type="journal article" date="2010" name="Cell">
        <title>Crystal structure of the Caenorhabditis elegans apoptosome reveals an octameric assembly of CED-4.</title>
        <authorList>
            <person name="Qi S."/>
            <person name="Pang Y."/>
            <person name="Hu Q."/>
            <person name="Liu Q."/>
            <person name="Li H."/>
            <person name="Zhou Y."/>
            <person name="He T."/>
            <person name="Liang Q."/>
            <person name="Liu Y."/>
            <person name="Yuan X."/>
            <person name="Luo G."/>
            <person name="Li H."/>
            <person name="Wang J."/>
            <person name="Yan N."/>
            <person name="Shi Y."/>
        </authorList>
    </citation>
    <scope>X-RAY CRYSTALLOGRAPHY (3.53 ANGSTROMS) OF ISOFORM A IN COMPLEX WITH CED-3; ATP AND MAGNESIUM</scope>
    <scope>FUNCTION</scope>
</reference>
<reference evidence="30 31 32 33" key="21">
    <citation type="journal article" date="2013" name="Genes Dev.">
        <title>Mechanistic insights into CED-4-mediated activation of CED-3.</title>
        <authorList>
            <person name="Huang W."/>
            <person name="Jiang T."/>
            <person name="Choi W."/>
            <person name="Qi S."/>
            <person name="Pang Y."/>
            <person name="Hu Q."/>
            <person name="Xu Y."/>
            <person name="Gong X."/>
            <person name="Jeffrey P.D."/>
            <person name="Wang J."/>
            <person name="Shi Y."/>
        </authorList>
    </citation>
    <scope>X-RAY CRYSTALLOGRAPHY (3.21 ANGSTROMS) OF ISOFORM A IN COMPLEX WITH CED-3; ATP AND MAGNESIUM</scope>
    <scope>FUNCTION</scope>
    <scope>MUTAGENESIS OF ALA-394</scope>
</reference>
<reference evidence="34 35 36" key="22">
    <citation type="journal article" date="2023" name="Life. Sci Alliance">
        <title>Structural insights into CED-3 activation.</title>
        <authorList>
            <person name="Li Y."/>
            <person name="Tian L."/>
            <person name="Zhang Y."/>
            <person name="Shi Y."/>
        </authorList>
    </citation>
    <scope>STRUCTURE BY ELECTRON MICROSCOPY (3.00 ANGSTROMS) OF ISOFORM A IN COMPLEX WITH CED-3 MUTANT ALA-358</scope>
    <scope>FUNCTION</scope>
    <scope>SUBUNIT</scope>
</reference>
<proteinExistence type="evidence at protein level"/>
<feature type="chain" id="PRO_0000089470" description="Cell death protein 4">
    <location>
        <begin position="1"/>
        <end position="549"/>
    </location>
</feature>
<feature type="domain" description="CARD" evidence="2">
    <location>
        <begin position="1"/>
        <end position="91"/>
    </location>
</feature>
<feature type="domain" description="NB-ARC" evidence="1">
    <location>
        <begin position="133"/>
        <end position="417"/>
    </location>
</feature>
<feature type="binding site" evidence="10 12 16 27 28 29 30 31 32 33">
    <location>
        <position position="131"/>
    </location>
    <ligand>
        <name>ATP</name>
        <dbReference type="ChEBI" id="CHEBI:30616"/>
    </ligand>
</feature>
<feature type="binding site" evidence="10 12 16 19 27 28 30 31 32 34 35 36">
    <location>
        <position position="162"/>
    </location>
    <ligand>
        <name>ATP</name>
        <dbReference type="ChEBI" id="CHEBI:30616"/>
    </ligand>
</feature>
<feature type="binding site" evidence="10 12 16 19 27 28 29 30 31 32 34 35 36">
    <location>
        <position position="164"/>
    </location>
    <ligand>
        <name>ATP</name>
        <dbReference type="ChEBI" id="CHEBI:30616"/>
    </ligand>
</feature>
<feature type="binding site" evidence="10 12 16 19 27 28 29 30 31 32 34 35 36">
    <location>
        <position position="165"/>
    </location>
    <ligand>
        <name>ATP</name>
        <dbReference type="ChEBI" id="CHEBI:30616"/>
    </ligand>
</feature>
<feature type="binding site" evidence="10 12 16 19 27 28 29 30 31 32 34 35 36">
    <location>
        <position position="166"/>
    </location>
    <ligand>
        <name>ATP</name>
        <dbReference type="ChEBI" id="CHEBI:30616"/>
    </ligand>
</feature>
<feature type="binding site" evidence="10 12 16 19 27 28 29 31 32 33 34 35 36">
    <location>
        <position position="166"/>
    </location>
    <ligand>
        <name>Mg(2+)</name>
        <dbReference type="ChEBI" id="CHEBI:18420"/>
    </ligand>
</feature>
<feature type="binding site" evidence="10 12 16 19 27 28 29 30 31 32 34 35 36">
    <location>
        <position position="167"/>
    </location>
    <ligand>
        <name>ATP</name>
        <dbReference type="ChEBI" id="CHEBI:30616"/>
    </ligand>
</feature>
<feature type="binding site" evidence="10 12 16 19 27 28 29 30 31 32 35 36">
    <location>
        <position position="273"/>
    </location>
    <ligand>
        <name>ATP</name>
        <dbReference type="ChEBI" id="CHEBI:30616"/>
    </ligand>
</feature>
<feature type="binding site" evidence="12 29">
    <location>
        <position position="367"/>
    </location>
    <ligand>
        <name>ATP</name>
        <dbReference type="ChEBI" id="CHEBI:30616"/>
    </ligand>
</feature>
<feature type="binding site" evidence="10 12 16 19 27 28 29 30 31 32 34 35 36">
    <location>
        <position position="369"/>
    </location>
    <ligand>
        <name>ATP</name>
        <dbReference type="ChEBI" id="CHEBI:30616"/>
    </ligand>
</feature>
<feature type="splice variant" id="VSP_062416" description="In isoform b.">
    <original>K</original>
    <variation>ARVVSDTDDSHSITDFINRVLSR</variation>
    <location>
        <position position="212"/>
    </location>
</feature>
<feature type="mutagenesis site" description="In n1162; reduces the number of apoptotic corpses and restores the number of male tail rays in an icd-1 RNAi background." evidence="8">
    <location>
        <begin position="80"/>
        <end position="549"/>
    </location>
</feature>
<feature type="mutagenesis site" description="Loss of dimerization without affecting interaction with ced-9, loss of ced-3 activation and severe reduction in the number of cell corpses in embryos in a ced-1 mutant background; when associated with E-233 and E-234." evidence="10">
    <original>V</original>
    <variation>D</variation>
    <location>
        <position position="230"/>
    </location>
</feature>
<feature type="mutagenesis site" description="Severe reduction in the number of cell corpses in embryos in a ced-1 mutant background. Loss of dimerization without affecting interaction with ced-9, loss of ced-3 activation and severe reduction in the number of cell corpses in embryos in a ced-1 mutant background; when associated with E-230 and E-234." evidence="10">
    <original>R</original>
    <variation>E</variation>
    <location>
        <position position="233"/>
    </location>
</feature>
<feature type="mutagenesis site" description="Loss of dimerization without affecting interaction with ced-9, loss of ced-3 activation and severe reduction in the number of cell corpses in embryos in a ced-1 mutant background; when associated with E-230 and E-233." evidence="10">
    <original>M</original>
    <variation>E</variation>
    <location>
        <position position="234"/>
    </location>
</feature>
<feature type="mutagenesis site" description="Severe reduction in the number of cell corpses in embryos in a ced-1 mutant background." evidence="10">
    <original>DD</original>
    <variation>AA</variation>
    <location>
        <begin position="250"/>
        <end position="251"/>
    </location>
</feature>
<feature type="mutagenesis site" description="In n1948; no effect on the interaction with mac-1." evidence="3">
    <original>I</original>
    <variation>N</variation>
    <location>
        <position position="258"/>
    </location>
</feature>
<feature type="mutagenesis site" description="Reduced interaction with ced-3." evidence="16">
    <original>A</original>
    <variation>W</variation>
    <location>
        <position position="394"/>
    </location>
</feature>
<feature type="helix" evidence="37">
    <location>
        <begin position="4"/>
        <end position="20"/>
    </location>
</feature>
<feature type="helix" evidence="37">
    <location>
        <begin position="23"/>
        <end position="26"/>
    </location>
</feature>
<feature type="helix" evidence="37">
    <location>
        <begin position="27"/>
        <end position="32"/>
    </location>
</feature>
<feature type="helix" evidence="37">
    <location>
        <begin position="38"/>
        <end position="45"/>
    </location>
</feature>
<feature type="strand" evidence="37">
    <location>
        <begin position="47"/>
        <end position="49"/>
    </location>
</feature>
<feature type="helix" evidence="37">
    <location>
        <begin position="50"/>
        <end position="64"/>
    </location>
</feature>
<feature type="strand" evidence="37">
    <location>
        <begin position="66"/>
        <end position="68"/>
    </location>
</feature>
<feature type="helix" evidence="37">
    <location>
        <begin position="69"/>
        <end position="77"/>
    </location>
</feature>
<feature type="helix" evidence="37">
    <location>
        <begin position="81"/>
        <end position="96"/>
    </location>
</feature>
<feature type="helix" evidence="37">
    <location>
        <begin position="101"/>
        <end position="104"/>
    </location>
</feature>
<feature type="turn" evidence="37">
    <location>
        <begin position="105"/>
        <end position="108"/>
    </location>
</feature>
<feature type="helix" evidence="37">
    <location>
        <begin position="112"/>
        <end position="121"/>
    </location>
</feature>
<feature type="helix" evidence="37">
    <location>
        <begin position="134"/>
        <end position="147"/>
    </location>
</feature>
<feature type="strand" evidence="37">
    <location>
        <begin position="150"/>
        <end position="158"/>
    </location>
</feature>
<feature type="helix" evidence="37">
    <location>
        <begin position="165"/>
        <end position="175"/>
    </location>
</feature>
<feature type="turn" evidence="37">
    <location>
        <begin position="181"/>
        <end position="183"/>
    </location>
</feature>
<feature type="strand" evidence="37">
    <location>
        <begin position="184"/>
        <end position="191"/>
    </location>
</feature>
<feature type="strand" evidence="40">
    <location>
        <begin position="196"/>
        <end position="198"/>
    </location>
</feature>
<feature type="helix" evidence="37">
    <location>
        <begin position="199"/>
        <end position="211"/>
    </location>
</feature>
<feature type="turn" evidence="37">
    <location>
        <begin position="212"/>
        <end position="214"/>
    </location>
</feature>
<feature type="strand" evidence="38">
    <location>
        <begin position="217"/>
        <end position="219"/>
    </location>
</feature>
<feature type="helix" evidence="37">
    <location>
        <begin position="228"/>
        <end position="239"/>
    </location>
</feature>
<feature type="strand" evidence="37">
    <location>
        <begin position="245"/>
        <end position="252"/>
    </location>
</feature>
<feature type="helix" evidence="37">
    <location>
        <begin position="255"/>
        <end position="263"/>
    </location>
</feature>
<feature type="strand" evidence="37">
    <location>
        <begin position="267"/>
        <end position="274"/>
    </location>
</feature>
<feature type="helix" evidence="37">
    <location>
        <begin position="275"/>
        <end position="280"/>
    </location>
</feature>
<feature type="strand" evidence="37">
    <location>
        <begin position="285"/>
        <end position="289"/>
    </location>
</feature>
<feature type="helix" evidence="37">
    <location>
        <begin position="295"/>
        <end position="304"/>
    </location>
</feature>
<feature type="helix" evidence="37">
    <location>
        <begin position="314"/>
        <end position="326"/>
    </location>
</feature>
<feature type="helix" evidence="37">
    <location>
        <begin position="330"/>
        <end position="337"/>
    </location>
</feature>
<feature type="strand" evidence="37">
    <location>
        <begin position="342"/>
        <end position="344"/>
    </location>
</feature>
<feature type="helix" evidence="37">
    <location>
        <begin position="345"/>
        <end position="358"/>
    </location>
</feature>
<feature type="helix" evidence="40">
    <location>
        <begin position="359"/>
        <end position="362"/>
    </location>
</feature>
<feature type="strand" evidence="37">
    <location>
        <begin position="367"/>
        <end position="373"/>
    </location>
</feature>
<feature type="helix" evidence="37">
    <location>
        <begin position="374"/>
        <end position="383"/>
    </location>
</feature>
<feature type="helix" evidence="37">
    <location>
        <begin position="387"/>
        <end position="392"/>
    </location>
</feature>
<feature type="helix" evidence="37">
    <location>
        <begin position="395"/>
        <end position="397"/>
    </location>
</feature>
<feature type="helix" evidence="37">
    <location>
        <begin position="407"/>
        <end position="413"/>
    </location>
</feature>
<feature type="helix" evidence="37">
    <location>
        <begin position="428"/>
        <end position="436"/>
    </location>
</feature>
<feature type="turn" evidence="37">
    <location>
        <begin position="437"/>
        <end position="439"/>
    </location>
</feature>
<feature type="strand" evidence="37">
    <location>
        <begin position="440"/>
        <end position="442"/>
    </location>
</feature>
<feature type="strand" evidence="37">
    <location>
        <begin position="444"/>
        <end position="447"/>
    </location>
</feature>
<feature type="strand" evidence="37">
    <location>
        <begin position="449"/>
        <end position="451"/>
    </location>
</feature>
<feature type="strand" evidence="37">
    <location>
        <begin position="453"/>
        <end position="455"/>
    </location>
</feature>
<feature type="helix" evidence="37">
    <location>
        <begin position="458"/>
        <end position="465"/>
    </location>
</feature>
<feature type="helix" evidence="37">
    <location>
        <begin position="471"/>
        <end position="477"/>
    </location>
</feature>
<feature type="turn" evidence="37">
    <location>
        <begin position="481"/>
        <end position="483"/>
    </location>
</feature>
<feature type="turn" evidence="39">
    <location>
        <begin position="488"/>
        <end position="490"/>
    </location>
</feature>
<feature type="helix" evidence="38">
    <location>
        <begin position="533"/>
        <end position="536"/>
    </location>
</feature>
<feature type="helix" evidence="37">
    <location>
        <begin position="537"/>
        <end position="540"/>
    </location>
</feature>
<gene>
    <name type="primary">ced-4</name>
    <name type="ORF">C35D10.9</name>
</gene>
<sequence length="549" mass="62878">MLCEIECRALSTAHTRLIHDFEPRDALTYLEGKNIFTEDHSELISKMSTRLERIANFLRIYRRQASELGPLIDFFNYNNQSHLADFLEDYIDFAINEPDLLRPVVIAPQFSRQMLDRKLLLGNVPKQMTCYIREYHVDRVIKKLDEMCDLDSFFLFLHGRAGSGKSVIASQALSKSDQLIGINYDSIVWLKDSGTAPKSTFDLFTDILLMLKSEDDLLNFPSVEHVTSVVLKRMICNALIDRPNTLFVFDDVVQEETIRWAQELRLRCLVTTRDVEISNAASQTCEFIEVTSLEIDECYDFLEAYGMPMPVGEKEEDVLNKTIELSSGNPATLMMFFKSCEPKTFEKMAQLNNKLESRGLVGVECITPYSYKSLAMALQRCVEVLSDEDRSALAFAVVMPPGVDIPVKLWSCVIPVDICSNEEEQLDDEVADRLKRLSKRGALLSGKRMPVLTFKIDHIIHMFLKHVVDAQTIANGISILEQRLLEIGNNNVSVPERHIPSHFQKFRRSSASEMYPKTTEETVIRPEDFPKFMQLHQKFYDSLKNFACC</sequence>
<protein>
    <recommendedName>
        <fullName>Cell death protein 4</fullName>
    </recommendedName>
</protein>